<sequence>MKNVKIALTKGRLEKKAIEIFKTININTRELQDKGRKLIFNCENEEYNIELFLVKAKDVETYVEYGAADIGIVGKDTLMETNKEFYEVLDLNVGKCKFALAALPSFKLDQGYNRKKIATKYPNIAREYFRKKGMDVELIKIEGSVELGPIVGLADAIVDIVETGNTLRENGLVVVEDICEISARMIVNKASMKTKKDEIIKIIENVSEVIRQ</sequence>
<accession>A7GDQ1</accession>
<reference key="1">
    <citation type="submission" date="2007-06" db="EMBL/GenBank/DDBJ databases">
        <authorList>
            <person name="Brinkac L.M."/>
            <person name="Daugherty S."/>
            <person name="Dodson R.J."/>
            <person name="Madupu R."/>
            <person name="Brown J.L."/>
            <person name="Bruce D."/>
            <person name="Detter C."/>
            <person name="Munk C."/>
            <person name="Smith L.A."/>
            <person name="Smith T.J."/>
            <person name="White O."/>
            <person name="Brettin T.S."/>
        </authorList>
    </citation>
    <scope>NUCLEOTIDE SEQUENCE [LARGE SCALE GENOMIC DNA]</scope>
    <source>
        <strain>Langeland / NCTC 10281 / Type F</strain>
    </source>
</reference>
<comment type="function">
    <text evidence="1">Catalyzes the condensation of ATP and 5-phosphoribose 1-diphosphate to form N'-(5'-phosphoribosyl)-ATP (PR-ATP). Has a crucial role in the pathway because the rate of histidine biosynthesis seems to be controlled primarily by regulation of HisG enzymatic activity.</text>
</comment>
<comment type="catalytic activity">
    <reaction evidence="1">
        <text>1-(5-phospho-beta-D-ribosyl)-ATP + diphosphate = 5-phospho-alpha-D-ribose 1-diphosphate + ATP</text>
        <dbReference type="Rhea" id="RHEA:18473"/>
        <dbReference type="ChEBI" id="CHEBI:30616"/>
        <dbReference type="ChEBI" id="CHEBI:33019"/>
        <dbReference type="ChEBI" id="CHEBI:58017"/>
        <dbReference type="ChEBI" id="CHEBI:73183"/>
        <dbReference type="EC" id="2.4.2.17"/>
    </reaction>
</comment>
<comment type="pathway">
    <text evidence="1">Amino-acid biosynthesis; L-histidine biosynthesis; L-histidine from 5-phospho-alpha-D-ribose 1-diphosphate: step 1/9.</text>
</comment>
<comment type="subunit">
    <text evidence="1">Heteromultimer composed of HisG and HisZ subunits.</text>
</comment>
<comment type="subcellular location">
    <subcellularLocation>
        <location evidence="1">Cytoplasm</location>
    </subcellularLocation>
</comment>
<comment type="domain">
    <text>Lacks the C-terminal regulatory region which is replaced by HisZ.</text>
</comment>
<comment type="similarity">
    <text evidence="1">Belongs to the ATP phosphoribosyltransferase family. Short subfamily.</text>
</comment>
<proteinExistence type="inferred from homology"/>
<gene>
    <name evidence="1" type="primary">hisG</name>
    <name type="ordered locus">CLI_1648</name>
</gene>
<evidence type="ECO:0000255" key="1">
    <source>
        <dbReference type="HAMAP-Rule" id="MF_01018"/>
    </source>
</evidence>
<dbReference type="EC" id="2.4.2.17" evidence="1"/>
<dbReference type="EMBL" id="CP000728">
    <property type="protein sequence ID" value="ABS41995.1"/>
    <property type="molecule type" value="Genomic_DNA"/>
</dbReference>
<dbReference type="RefSeq" id="WP_012099670.1">
    <property type="nucleotide sequence ID" value="NC_009699.1"/>
</dbReference>
<dbReference type="SMR" id="A7GDQ1"/>
<dbReference type="KEGG" id="cbf:CLI_1648"/>
<dbReference type="HOGENOM" id="CLU_038115_2_0_9"/>
<dbReference type="UniPathway" id="UPA00031">
    <property type="reaction ID" value="UER00006"/>
</dbReference>
<dbReference type="Proteomes" id="UP000002410">
    <property type="component" value="Chromosome"/>
</dbReference>
<dbReference type="GO" id="GO:0005737">
    <property type="term" value="C:cytoplasm"/>
    <property type="evidence" value="ECO:0007669"/>
    <property type="project" value="UniProtKB-SubCell"/>
</dbReference>
<dbReference type="GO" id="GO:0005524">
    <property type="term" value="F:ATP binding"/>
    <property type="evidence" value="ECO:0007669"/>
    <property type="project" value="UniProtKB-KW"/>
</dbReference>
<dbReference type="GO" id="GO:0003879">
    <property type="term" value="F:ATP phosphoribosyltransferase activity"/>
    <property type="evidence" value="ECO:0007669"/>
    <property type="project" value="UniProtKB-UniRule"/>
</dbReference>
<dbReference type="GO" id="GO:0000105">
    <property type="term" value="P:L-histidine biosynthetic process"/>
    <property type="evidence" value="ECO:0007669"/>
    <property type="project" value="UniProtKB-UniRule"/>
</dbReference>
<dbReference type="CDD" id="cd13595">
    <property type="entry name" value="PBP2_HisGs"/>
    <property type="match status" value="1"/>
</dbReference>
<dbReference type="FunFam" id="3.40.190.10:FF:000008">
    <property type="entry name" value="ATP phosphoribosyltransferase"/>
    <property type="match status" value="1"/>
</dbReference>
<dbReference type="FunFam" id="3.40.190.10:FF:000011">
    <property type="entry name" value="ATP phosphoribosyltransferase"/>
    <property type="match status" value="1"/>
</dbReference>
<dbReference type="Gene3D" id="3.40.190.10">
    <property type="entry name" value="Periplasmic binding protein-like II"/>
    <property type="match status" value="2"/>
</dbReference>
<dbReference type="HAMAP" id="MF_01018">
    <property type="entry name" value="HisG_Short"/>
    <property type="match status" value="1"/>
</dbReference>
<dbReference type="InterPro" id="IPR013820">
    <property type="entry name" value="ATP_PRibTrfase_cat"/>
</dbReference>
<dbReference type="InterPro" id="IPR018198">
    <property type="entry name" value="ATP_PRibTrfase_CS"/>
</dbReference>
<dbReference type="InterPro" id="IPR001348">
    <property type="entry name" value="ATP_PRibTrfase_HisG"/>
</dbReference>
<dbReference type="InterPro" id="IPR024893">
    <property type="entry name" value="ATP_PRibTrfase_HisG_short"/>
</dbReference>
<dbReference type="NCBIfam" id="TIGR00070">
    <property type="entry name" value="hisG"/>
    <property type="match status" value="1"/>
</dbReference>
<dbReference type="PANTHER" id="PTHR21403:SF8">
    <property type="entry name" value="ATP PHOSPHORIBOSYLTRANSFERASE"/>
    <property type="match status" value="1"/>
</dbReference>
<dbReference type="PANTHER" id="PTHR21403">
    <property type="entry name" value="ATP PHOSPHORIBOSYLTRANSFERASE ATP-PRTASE"/>
    <property type="match status" value="1"/>
</dbReference>
<dbReference type="Pfam" id="PF01634">
    <property type="entry name" value="HisG"/>
    <property type="match status" value="1"/>
</dbReference>
<dbReference type="SUPFAM" id="SSF53850">
    <property type="entry name" value="Periplasmic binding protein-like II"/>
    <property type="match status" value="1"/>
</dbReference>
<dbReference type="PROSITE" id="PS01316">
    <property type="entry name" value="ATP_P_PHORIBOSYLTR"/>
    <property type="match status" value="1"/>
</dbReference>
<name>HIS1_CLOBL</name>
<protein>
    <recommendedName>
        <fullName evidence="1">ATP phosphoribosyltransferase</fullName>
        <shortName evidence="1">ATP-PRT</shortName>
        <shortName evidence="1">ATP-PRTase</shortName>
        <ecNumber evidence="1">2.4.2.17</ecNumber>
    </recommendedName>
</protein>
<organism>
    <name type="scientific">Clostridium botulinum (strain Langeland / NCTC 10281 / Type F)</name>
    <dbReference type="NCBI Taxonomy" id="441772"/>
    <lineage>
        <taxon>Bacteria</taxon>
        <taxon>Bacillati</taxon>
        <taxon>Bacillota</taxon>
        <taxon>Clostridia</taxon>
        <taxon>Eubacteriales</taxon>
        <taxon>Clostridiaceae</taxon>
        <taxon>Clostridium</taxon>
    </lineage>
</organism>
<keyword id="KW-0028">Amino-acid biosynthesis</keyword>
<keyword id="KW-0067">ATP-binding</keyword>
<keyword id="KW-0963">Cytoplasm</keyword>
<keyword id="KW-0328">Glycosyltransferase</keyword>
<keyword id="KW-0368">Histidine biosynthesis</keyword>
<keyword id="KW-0547">Nucleotide-binding</keyword>
<keyword id="KW-0808">Transferase</keyword>
<feature type="chain" id="PRO_0000319516" description="ATP phosphoribosyltransferase">
    <location>
        <begin position="1"/>
        <end position="212"/>
    </location>
</feature>